<protein>
    <recommendedName>
        <fullName>E1B 55 kDa protein</fullName>
        <shortName>E1B-55K</shortName>
    </recommendedName>
    <alternativeName>
        <fullName>E1B protein, large T-antigen</fullName>
    </alternativeName>
    <alternativeName>
        <fullName>E1B protein, large T-antigen homolog</fullName>
    </alternativeName>
    <alternativeName>
        <fullName>E1B-495R</fullName>
    </alternativeName>
</protein>
<proteinExistence type="inferred from homology"/>
<comment type="function">
    <text evidence="1">Plays a major role to prevent cellular inhibition of viral genome replication. Assembles an SCF-like E3 ubiquitin ligase complex based on the cellular proteins ELOB, ELOC, CUL5 and RBX1, in cooperation with viral E4orf6. This viral RING-type ligase ubiquitinates cellular substrates and targets them to proteasomal degradation: TP53/p53, LIG4, MRE11-RAD50-NBS1 (MRN) complex, ITGA3, DAXX and BLM. E1B-55K probably acts as the substrate-specific adapter of the SCF-like E3 ubiquitin ligase complex. Degradation of host TP53/p53 activity is essential for preventing E1A-induced TP53 accumulation that would otherwise lead to cell apoptosis and growth arrest. E1B-55K also inactivates TP53 transcription-factor activity by binding its transactivation domain. E1B-55K also functions as a SUMO1 E3 ligase for TP53 which causes the latter to be sequestered in promyelocytic leukemia (PML) nuclear bodies thereby contributing to maximal inhibition of TP53 function.</text>
</comment>
<comment type="subunit">
    <text evidence="1 2">Interacts with host PML-4 and PML-5; this interaction promotes efficient subnuclear targeting of E1B-55K to PML nuclear bodies. Interacts with E4-ORF3 protein (By similarity). Interacts with E4-ORF6 protein (By similarity).</text>
</comment>
<comment type="subcellular location">
    <subcellularLocation>
        <location evidence="1">Host nucleus</location>
    </subcellularLocation>
    <subcellularLocation>
        <location evidence="1">Host cytoplasm</location>
    </subcellularLocation>
    <text evidence="1">Colocalizes with host TP53 to host PML nuclear bodies. PML localization of E1B-55K is necessary for E1B-55K-dependent SUMOylation of TP53.</text>
</comment>
<comment type="domain">
    <text evidence="1">Contains a PML interaction motif that allows the subnuclear PML localization.</text>
</comment>
<comment type="similarity">
    <text evidence="3">Belongs to the adenoviridae E1B 55 kDa protein family.</text>
</comment>
<reference key="1">
    <citation type="journal article" date="1985" name="Gene">
        <title>The nucleotide sequence of the early region of the Tupaia adenovirus DNA corresponding to the oncogenic region E1b of human adenovirus 7.</title>
        <authorList>
            <person name="Flugel R.M."/>
            <person name="Bannert H."/>
            <person name="Suhai S."/>
            <person name="Darai G."/>
        </authorList>
    </citation>
    <scope>NUCLEOTIDE SEQUENCE [GENOMIC DNA]</scope>
</reference>
<sequence>MAQNNSDGVEGASPAKRRRLDQVTYSEICADFRSGSFSDFFMEKYNFAQVASYKMQPDDDWTDMIAQHAKIELDPTKEYVILSTVFIQSNCYIIGHGAKIVIVGEPGIAFKVLTKSFGPVITNMWAVSFTDCVFQRRDSYNGKVFTCASQVLFHNCFFVGFTGTCITSTAALTVRGCQFLACYRPIMFLAAFDLTVKHCVFDKCVIAISTEGDFEISSNLCTDSCCFLSAAGTGIFSYNSIVNPFTLQDSAEFSMVTCADAKVQLLHTIHIHSNPKLVYPQFMHNVLLRAKLFVGRRRGGFHPHFCSLKYSLLTLAKGSERKVNLSTCYPDGLKVYKVLNRNPNRLFTRLCECDASHQTADIVLGEVGLPATADPTLDSVDCLEFSSDEEW</sequence>
<organism>
    <name type="scientific">Tree shrew adenovirus serotype 1</name>
    <name type="common">TSAdV-1</name>
    <name type="synonym">Tupaia adenovirus 1</name>
    <dbReference type="NCBI Taxonomy" id="47680"/>
    <lineage>
        <taxon>Viruses</taxon>
        <taxon>Varidnaviria</taxon>
        <taxon>Bamfordvirae</taxon>
        <taxon>Preplasmiviricota</taxon>
        <taxon>Tectiliviricetes</taxon>
        <taxon>Rowavirales</taxon>
        <taxon>Adenoviridae</taxon>
        <taxon>Mastadenovirus</taxon>
        <taxon>Tree shrew mastadenovirus A</taxon>
    </lineage>
</organism>
<accession>P04885</accession>
<feature type="chain" id="PRO_0000221734" description="E1B 55 kDa protein">
    <location>
        <begin position="1"/>
        <end position="391"/>
    </location>
</feature>
<feature type="modified residue" description="Phosphoserine" evidence="1">
    <location>
        <position position="387"/>
    </location>
</feature>
<dbReference type="EMBL" id="M10054">
    <property type="protein sequence ID" value="AAA42531.1"/>
    <property type="molecule type" value="Genomic_DNA"/>
</dbReference>
<dbReference type="PIR" id="A03813">
    <property type="entry name" value="ERADT4"/>
</dbReference>
<dbReference type="RefSeq" id="NP_758818.1">
    <property type="nucleotide sequence ID" value="NC_044936.1"/>
</dbReference>
<dbReference type="RefSeq" id="YP_068057.1">
    <property type="nucleotide sequence ID" value="AC_000190.1"/>
</dbReference>
<dbReference type="SMR" id="P04885"/>
<dbReference type="GeneID" id="41900251"/>
<dbReference type="OrthoDB" id="2100at10239"/>
<dbReference type="GO" id="GO:0030430">
    <property type="term" value="C:host cell cytoplasm"/>
    <property type="evidence" value="ECO:0000250"/>
    <property type="project" value="UniProtKB"/>
</dbReference>
<dbReference type="GO" id="GO:0042025">
    <property type="term" value="C:host cell nucleus"/>
    <property type="evidence" value="ECO:0007669"/>
    <property type="project" value="UniProtKB-SubCell"/>
</dbReference>
<dbReference type="GO" id="GO:1990756">
    <property type="term" value="F:ubiquitin-like ligase-substrate adaptor activity"/>
    <property type="evidence" value="ECO:0000250"/>
    <property type="project" value="UniProtKB"/>
</dbReference>
<dbReference type="GO" id="GO:0052150">
    <property type="term" value="P:symbiont-mediated perturbation of host apoptosis"/>
    <property type="evidence" value="ECO:0007669"/>
    <property type="project" value="UniProtKB-KW"/>
</dbReference>
<dbReference type="GO" id="GO:0039648">
    <property type="term" value="P:symbiont-mediated perturbation of host ubiquitin-like protein modification"/>
    <property type="evidence" value="ECO:0000250"/>
    <property type="project" value="UniProtKB"/>
</dbReference>
<dbReference type="Gene3D" id="2.160.20.10">
    <property type="entry name" value="Single-stranded right-handed beta-helix, Pectin lyase-like"/>
    <property type="match status" value="1"/>
</dbReference>
<dbReference type="InterPro" id="IPR002612">
    <property type="entry name" value="Adeno_E1B_55kDa"/>
</dbReference>
<dbReference type="InterPro" id="IPR012334">
    <property type="entry name" value="Pectin_lyas_fold"/>
</dbReference>
<dbReference type="InterPro" id="IPR011050">
    <property type="entry name" value="Pectin_lyase_fold/virulence"/>
</dbReference>
<dbReference type="Pfam" id="PF01696">
    <property type="entry name" value="Adeno_E1B_55K"/>
    <property type="match status" value="1"/>
</dbReference>
<dbReference type="SUPFAM" id="SSF51126">
    <property type="entry name" value="Pectin lyase-like"/>
    <property type="match status" value="1"/>
</dbReference>
<keyword id="KW-0244">Early protein</keyword>
<keyword id="KW-1035">Host cytoplasm</keyword>
<keyword id="KW-1048">Host nucleus</keyword>
<keyword id="KW-0945">Host-virus interaction</keyword>
<keyword id="KW-1119">Modulation of host cell apoptosis by virus</keyword>
<keyword id="KW-0597">Phosphoprotein</keyword>
<organismHost>
    <name type="scientific">Tupaiidae</name>
    <name type="common">tree shrews</name>
    <dbReference type="NCBI Taxonomy" id="9393"/>
</organismHost>
<evidence type="ECO:0000250" key="1">
    <source>
        <dbReference type="UniProtKB" id="P03243"/>
    </source>
</evidence>
<evidence type="ECO:0000250" key="2">
    <source>
        <dbReference type="UniProtKB" id="P03244"/>
    </source>
</evidence>
<evidence type="ECO:0000305" key="3"/>
<name>E1B55_ADET1</name>